<comment type="function">
    <text evidence="1">Produces ATP from ADP in the presence of a proton gradient across the membrane.</text>
</comment>
<comment type="subunit">
    <text>F-type ATPases have 2 components, CF(1) - the catalytic core - and CF(0) - the membrane proton channel. CF(1) has five subunits: alpha(3), beta(3), gamma(1), delta(1), epsilon(1). CF(0) has three main subunits: a, b and c.</text>
</comment>
<comment type="subcellular location">
    <subcellularLocation>
        <location evidence="1">Cell inner membrane</location>
        <topology evidence="1">Peripheral membrane protein</topology>
    </subcellularLocation>
</comment>
<comment type="similarity">
    <text evidence="1">Belongs to the ATPase epsilon chain family.</text>
</comment>
<protein>
    <recommendedName>
        <fullName evidence="1">ATP synthase epsilon chain</fullName>
    </recommendedName>
    <alternativeName>
        <fullName evidence="1">ATP synthase F1 sector epsilon subunit</fullName>
    </alternativeName>
    <alternativeName>
        <fullName evidence="1">F-ATPase epsilon subunit</fullName>
    </alternativeName>
</protein>
<feature type="chain" id="PRO_0000265794" description="ATP synthase epsilon chain">
    <location>
        <begin position="1"/>
        <end position="141"/>
    </location>
</feature>
<reference key="1">
    <citation type="submission" date="2005-10" db="EMBL/GenBank/DDBJ databases">
        <title>Complete sequence of chromosome 1 of Burkholderia sp. 383.</title>
        <authorList>
            <consortium name="US DOE Joint Genome Institute"/>
            <person name="Copeland A."/>
            <person name="Lucas S."/>
            <person name="Lapidus A."/>
            <person name="Barry K."/>
            <person name="Detter J.C."/>
            <person name="Glavina T."/>
            <person name="Hammon N."/>
            <person name="Israni S."/>
            <person name="Pitluck S."/>
            <person name="Chain P."/>
            <person name="Malfatti S."/>
            <person name="Shin M."/>
            <person name="Vergez L."/>
            <person name="Schmutz J."/>
            <person name="Larimer F."/>
            <person name="Land M."/>
            <person name="Kyrpides N."/>
            <person name="Lykidis A."/>
            <person name="Richardson P."/>
        </authorList>
    </citation>
    <scope>NUCLEOTIDE SEQUENCE [LARGE SCALE GENOMIC DNA]</scope>
    <source>
        <strain>ATCC 17760 / DSM 23089 / LMG 22485 / NCIMB 9086 / R18194 / 383</strain>
    </source>
</reference>
<gene>
    <name evidence="1" type="primary">atpC</name>
    <name type="ordered locus">Bcep18194_A3289</name>
</gene>
<proteinExistence type="inferred from homology"/>
<sequence length="141" mass="14985">MATIKVDVVSAEEQIFSGEAKFVALPGETGELGILPGHTPLITRIRPGAVRIEVEGGNDEFVFVAGGILEVQPGAVTVLADTAIRGKDLDAAKAEEARKRAEETLQNAKSDLDLAKAQSELATAMAQLEAIQRLAKIRSRH</sequence>
<accession>Q39KX5</accession>
<dbReference type="EMBL" id="CP000151">
    <property type="protein sequence ID" value="ABB06891.1"/>
    <property type="molecule type" value="Genomic_DNA"/>
</dbReference>
<dbReference type="RefSeq" id="WP_006477288.1">
    <property type="nucleotide sequence ID" value="NZ_WNDV01000049.1"/>
</dbReference>
<dbReference type="SMR" id="Q39KX5"/>
<dbReference type="KEGG" id="bur:Bcep18194_A3289"/>
<dbReference type="HOGENOM" id="CLU_084338_2_0_4"/>
<dbReference type="Proteomes" id="UP000002705">
    <property type="component" value="Chromosome 1"/>
</dbReference>
<dbReference type="GO" id="GO:0005886">
    <property type="term" value="C:plasma membrane"/>
    <property type="evidence" value="ECO:0007669"/>
    <property type="project" value="UniProtKB-SubCell"/>
</dbReference>
<dbReference type="GO" id="GO:0045259">
    <property type="term" value="C:proton-transporting ATP synthase complex"/>
    <property type="evidence" value="ECO:0007669"/>
    <property type="project" value="UniProtKB-KW"/>
</dbReference>
<dbReference type="GO" id="GO:0005524">
    <property type="term" value="F:ATP binding"/>
    <property type="evidence" value="ECO:0007669"/>
    <property type="project" value="UniProtKB-UniRule"/>
</dbReference>
<dbReference type="GO" id="GO:0046933">
    <property type="term" value="F:proton-transporting ATP synthase activity, rotational mechanism"/>
    <property type="evidence" value="ECO:0007669"/>
    <property type="project" value="UniProtKB-UniRule"/>
</dbReference>
<dbReference type="CDD" id="cd12152">
    <property type="entry name" value="F1-ATPase_delta"/>
    <property type="match status" value="1"/>
</dbReference>
<dbReference type="FunFam" id="2.60.15.10:FF:000001">
    <property type="entry name" value="ATP synthase epsilon chain"/>
    <property type="match status" value="1"/>
</dbReference>
<dbReference type="Gene3D" id="1.20.5.440">
    <property type="entry name" value="ATP synthase delta/epsilon subunit, C-terminal domain"/>
    <property type="match status" value="1"/>
</dbReference>
<dbReference type="Gene3D" id="2.60.15.10">
    <property type="entry name" value="F0F1 ATP synthase delta/epsilon subunit, N-terminal"/>
    <property type="match status" value="1"/>
</dbReference>
<dbReference type="HAMAP" id="MF_00530">
    <property type="entry name" value="ATP_synth_epsil_bac"/>
    <property type="match status" value="1"/>
</dbReference>
<dbReference type="InterPro" id="IPR036794">
    <property type="entry name" value="ATP_F1_dsu/esu_C_sf"/>
</dbReference>
<dbReference type="InterPro" id="IPR001469">
    <property type="entry name" value="ATP_synth_F1_dsu/esu"/>
</dbReference>
<dbReference type="InterPro" id="IPR020546">
    <property type="entry name" value="ATP_synth_F1_dsu/esu_N"/>
</dbReference>
<dbReference type="InterPro" id="IPR020547">
    <property type="entry name" value="ATP_synth_F1_esu_C"/>
</dbReference>
<dbReference type="InterPro" id="IPR036771">
    <property type="entry name" value="ATPsynth_dsu/esu_N"/>
</dbReference>
<dbReference type="NCBIfam" id="TIGR01216">
    <property type="entry name" value="ATP_synt_epsi"/>
    <property type="match status" value="1"/>
</dbReference>
<dbReference type="NCBIfam" id="NF001847">
    <property type="entry name" value="PRK00571.1-4"/>
    <property type="match status" value="1"/>
</dbReference>
<dbReference type="PANTHER" id="PTHR13822">
    <property type="entry name" value="ATP SYNTHASE DELTA/EPSILON CHAIN"/>
    <property type="match status" value="1"/>
</dbReference>
<dbReference type="PANTHER" id="PTHR13822:SF10">
    <property type="entry name" value="ATP SYNTHASE EPSILON CHAIN, CHLOROPLASTIC"/>
    <property type="match status" value="1"/>
</dbReference>
<dbReference type="Pfam" id="PF00401">
    <property type="entry name" value="ATP-synt_DE"/>
    <property type="match status" value="1"/>
</dbReference>
<dbReference type="Pfam" id="PF02823">
    <property type="entry name" value="ATP-synt_DE_N"/>
    <property type="match status" value="1"/>
</dbReference>
<dbReference type="SUPFAM" id="SSF46604">
    <property type="entry name" value="Epsilon subunit of F1F0-ATP synthase C-terminal domain"/>
    <property type="match status" value="1"/>
</dbReference>
<dbReference type="SUPFAM" id="SSF51344">
    <property type="entry name" value="Epsilon subunit of F1F0-ATP synthase N-terminal domain"/>
    <property type="match status" value="1"/>
</dbReference>
<name>ATPE_BURL3</name>
<keyword id="KW-0066">ATP synthesis</keyword>
<keyword id="KW-0997">Cell inner membrane</keyword>
<keyword id="KW-1003">Cell membrane</keyword>
<keyword id="KW-0139">CF(1)</keyword>
<keyword id="KW-0375">Hydrogen ion transport</keyword>
<keyword id="KW-0406">Ion transport</keyword>
<keyword id="KW-0472">Membrane</keyword>
<keyword id="KW-0813">Transport</keyword>
<evidence type="ECO:0000255" key="1">
    <source>
        <dbReference type="HAMAP-Rule" id="MF_00530"/>
    </source>
</evidence>
<organism>
    <name type="scientific">Burkholderia lata (strain ATCC 17760 / DSM 23089 / LMG 22485 / NCIMB 9086 / R18194 / 383)</name>
    <dbReference type="NCBI Taxonomy" id="482957"/>
    <lineage>
        <taxon>Bacteria</taxon>
        <taxon>Pseudomonadati</taxon>
        <taxon>Pseudomonadota</taxon>
        <taxon>Betaproteobacteria</taxon>
        <taxon>Burkholderiales</taxon>
        <taxon>Burkholderiaceae</taxon>
        <taxon>Burkholderia</taxon>
        <taxon>Burkholderia cepacia complex</taxon>
    </lineage>
</organism>